<feature type="chain" id="PRO_0000204047" description="Cyanide hydratase">
    <location>
        <begin position="1"/>
        <end position="355"/>
    </location>
</feature>
<feature type="domain" description="CN hydrolase" evidence="2">
    <location>
        <begin position="6"/>
        <end position="286"/>
    </location>
</feature>
<feature type="active site" description="Proton acceptor" evidence="1">
    <location>
        <position position="46"/>
    </location>
</feature>
<feature type="active site" evidence="1">
    <location>
        <position position="128"/>
    </location>
</feature>
<feature type="active site" description="Nucleophile" evidence="1">
    <location>
        <position position="163"/>
    </location>
</feature>
<feature type="mutagenesis site" description="Completely abolishes enzymatic activity." evidence="5">
    <original>C</original>
    <variation>A</variation>
    <location>
        <position position="163"/>
    </location>
</feature>
<feature type="mutagenesis site" description="Completely abolishes enzymatic activity." evidence="3">
    <original>F</original>
    <variation>L</variation>
    <location>
        <position position="170"/>
    </location>
</feature>
<proteinExistence type="evidence at protein level"/>
<dbReference type="EC" id="4.2.1.66" evidence="1 4"/>
<dbReference type="EMBL" id="M99046">
    <property type="protein sequence ID" value="AAA33336.1"/>
    <property type="status" value="ALT_FRAME"/>
    <property type="molecule type" value="mRNA"/>
</dbReference>
<dbReference type="SMR" id="P32963"/>
<dbReference type="BRENDA" id="4.2.1.66">
    <property type="organism ID" value="2350"/>
</dbReference>
<dbReference type="GO" id="GO:0030196">
    <property type="term" value="F:cyanide hydratase activity"/>
    <property type="evidence" value="ECO:0007669"/>
    <property type="project" value="UniProtKB-UniRule"/>
</dbReference>
<dbReference type="GO" id="GO:0000257">
    <property type="term" value="F:nitrilase activity"/>
    <property type="evidence" value="ECO:0007669"/>
    <property type="project" value="UniProtKB-ARBA"/>
</dbReference>
<dbReference type="GO" id="GO:0019500">
    <property type="term" value="P:cyanide catabolic process"/>
    <property type="evidence" value="ECO:0007669"/>
    <property type="project" value="UniProtKB-UniRule"/>
</dbReference>
<dbReference type="CDD" id="cd07564">
    <property type="entry name" value="nitrilases_CHs"/>
    <property type="match status" value="1"/>
</dbReference>
<dbReference type="FunFam" id="3.60.110.10:FF:000011">
    <property type="entry name" value="Cyanide hydratase"/>
    <property type="match status" value="1"/>
</dbReference>
<dbReference type="Gene3D" id="3.60.110.10">
    <property type="entry name" value="Carbon-nitrogen hydrolase"/>
    <property type="match status" value="1"/>
</dbReference>
<dbReference type="HAMAP" id="MF_03224">
    <property type="entry name" value="CN_hydrolase"/>
    <property type="match status" value="1"/>
</dbReference>
<dbReference type="InterPro" id="IPR003010">
    <property type="entry name" value="C-N_Hydrolase"/>
</dbReference>
<dbReference type="InterPro" id="IPR036526">
    <property type="entry name" value="C-N_Hydrolase_sf"/>
</dbReference>
<dbReference type="InterPro" id="IPR037544">
    <property type="entry name" value="CN_hydrolase"/>
</dbReference>
<dbReference type="InterPro" id="IPR000132">
    <property type="entry name" value="Nitrilase/CN_hydratase_CS"/>
</dbReference>
<dbReference type="InterPro" id="IPR044149">
    <property type="entry name" value="Nitrilases_CHs"/>
</dbReference>
<dbReference type="PANTHER" id="PTHR46044:SF4">
    <property type="entry name" value="CYANIDE HYDRATASE"/>
    <property type="match status" value="1"/>
</dbReference>
<dbReference type="PANTHER" id="PTHR46044">
    <property type="entry name" value="NITRILASE"/>
    <property type="match status" value="1"/>
</dbReference>
<dbReference type="Pfam" id="PF00795">
    <property type="entry name" value="CN_hydrolase"/>
    <property type="match status" value="1"/>
</dbReference>
<dbReference type="SUPFAM" id="SSF56317">
    <property type="entry name" value="Carbon-nitrogen hydrolase"/>
    <property type="match status" value="1"/>
</dbReference>
<dbReference type="PROSITE" id="PS50263">
    <property type="entry name" value="CN_HYDROLASE"/>
    <property type="match status" value="1"/>
</dbReference>
<dbReference type="PROSITE" id="PS00920">
    <property type="entry name" value="NITRIL_CHT_1"/>
    <property type="match status" value="1"/>
</dbReference>
<dbReference type="PROSITE" id="PS00921">
    <property type="entry name" value="NITRIL_CHT_2"/>
    <property type="match status" value="1"/>
</dbReference>
<protein>
    <recommendedName>
        <fullName evidence="1 6">Cyanide hydratase</fullName>
        <shortName evidence="1">CHT</shortName>
        <ecNumber evidence="1 4">4.2.1.66</ecNumber>
    </recommendedName>
    <alternativeName>
        <fullName evidence="1">Cyanide-degrading nitrilase</fullName>
    </alternativeName>
    <alternativeName>
        <fullName evidence="1 6">Formamide hydrolyase</fullName>
    </alternativeName>
</protein>
<evidence type="ECO:0000255" key="1">
    <source>
        <dbReference type="HAMAP-Rule" id="MF_03224"/>
    </source>
</evidence>
<evidence type="ECO:0000255" key="2">
    <source>
        <dbReference type="PROSITE-ProRule" id="PRU00054"/>
    </source>
</evidence>
<evidence type="ECO:0000269" key="3">
    <source>
    </source>
</evidence>
<evidence type="ECO:0000269" key="4">
    <source>
    </source>
</evidence>
<evidence type="ECO:0000269" key="5">
    <source>
    </source>
</evidence>
<evidence type="ECO:0000303" key="6">
    <source>
    </source>
</evidence>
<evidence type="ECO:0000305" key="7"/>
<reference key="1">
    <citation type="journal article" date="1993" name="J. Gen. Microbiol.">
        <title>Purification and properties of cyanide hydratase from Fusarium lateritium and analysis of the corresponding chy1 gene.</title>
        <authorList>
            <person name="Cluness M.J."/>
            <person name="Turner P.D."/>
            <person name="Clements E."/>
            <person name="Brown D.T."/>
            <person name="O'Reilly C."/>
        </authorList>
    </citation>
    <scope>NUCLEOTIDE SEQUENCE [MRNA]</scope>
    <scope>FUNCTION</scope>
    <scope>CATALYTIC ACTIVITY</scope>
    <scope>BIOPHYSICOCHEMICAL PROPERTIES</scope>
    <source>
        <strain>IMI 300533</strain>
    </source>
</reference>
<reference key="2">
    <citation type="journal article" date="1995" name="FEMS Microbiol. Lett.">
        <title>Expression of the cyanide hydratase enzyme from Fusarium lateritium in Escherichia coli and identification of an essential cysteine residue.</title>
        <authorList>
            <person name="Brown D.T."/>
            <person name="Turner P.D."/>
            <person name="O'Reilly C."/>
        </authorList>
    </citation>
    <scope>MUTAGENESIS OF CYS-163</scope>
</reference>
<reference key="3">
    <citation type="journal article" date="2003" name="FEMS Microbiol. Lett.">
        <title>The cyanide hydratase enzyme of Fusarium lateritium also has nitrilase activity.</title>
        <authorList>
            <person name="Nolan L.M."/>
            <person name="Harnedy P.A."/>
            <person name="Turner P."/>
            <person name="Hearne A.B."/>
            <person name="O'Reilly C."/>
        </authorList>
    </citation>
    <scope>FUNCTION</scope>
    <scope>MUTAGENESIS OF PHE-170</scope>
</reference>
<keyword id="KW-0378">Hydrolase</keyword>
<keyword id="KW-0456">Lyase</keyword>
<accession>P32963</accession>
<comment type="function">
    <text evidence="1 3 4">Catalyzes the hydration of cyanide to formamide. Degradation of cyanide may be important for plant pathogenic fungi in infection of cyanogenic plants (PubMed:8409923). Also has low but significant nitrilase activity with acetonitrile, propionitrile and benzonitrile (PubMed:12725921).</text>
</comment>
<comment type="catalytic activity">
    <reaction evidence="1 4">
        <text>formamide = hydrogen cyanide + H2O</text>
        <dbReference type="Rhea" id="RHEA:21720"/>
        <dbReference type="ChEBI" id="CHEBI:15377"/>
        <dbReference type="ChEBI" id="CHEBI:16397"/>
        <dbReference type="ChEBI" id="CHEBI:18407"/>
        <dbReference type="EC" id="4.2.1.66"/>
    </reaction>
</comment>
<comment type="biophysicochemical properties">
    <kinetics>
        <KM evidence="4">43 mM for cyanide</KM>
    </kinetics>
    <phDependence>
        <text evidence="4">Optimum pH is 8.5.</text>
    </phDependence>
</comment>
<comment type="subunit">
    <text evidence="1">Oligomer of dimers, forming left-handed helical fibers.</text>
</comment>
<comment type="induction">
    <text evidence="1 4">By cyanide.</text>
</comment>
<comment type="similarity">
    <text evidence="1 7">Belongs to the carbon-nitrogen hydrolase superfamily. Nitrilase family.</text>
</comment>
<comment type="sequence caution" evidence="7">
    <conflict type="frameshift">
        <sequence resource="EMBL-CDS" id="AAA33336"/>
    </conflict>
</comment>
<gene>
    <name evidence="6" type="primary">chy1</name>
</gene>
<sequence>MAITKYKAAAVTSEPGWFDLEGGVRKTIDFINEAGEAGCKFVAFPEVWIPGYPYWMWKVTYLQSLPMLKRYRENSMAVDSEEMRRIRRAARDNQIFVSLGFSEIDHATLYLSQVLIGPDGAVINHRRKIKPTHVEKLVYGDGSGDTFMSVSETEIGRVGQLNCWENMNPFLKSLNVSAGEQVHVAAWPVYPGKERQVHPDPATNYADPASDLVTPEYAIETGTWTLAPFQRLSVEGLKINTPEGVEPETDPSVYNGHARIYRPDGSLVVKPEKDFDGLLFVDIDLNECHLTKVLADFAGHYMRPDLIRLLVDTRRKKLITEADPNGSIATYSTRQRLGLDKPLSKKEGDETTDVL</sequence>
<organism>
    <name type="scientific">Gibberella baccata</name>
    <name type="common">Fusarium lateritium</name>
    <dbReference type="NCBI Taxonomy" id="5523"/>
    <lineage>
        <taxon>Eukaryota</taxon>
        <taxon>Fungi</taxon>
        <taxon>Dikarya</taxon>
        <taxon>Ascomycota</taxon>
        <taxon>Pezizomycotina</taxon>
        <taxon>Sordariomycetes</taxon>
        <taxon>Hypocreomycetidae</taxon>
        <taxon>Hypocreales</taxon>
        <taxon>Nectriaceae</taxon>
        <taxon>Fusarium</taxon>
        <taxon>Fusarium lateritium species complex</taxon>
    </lineage>
</organism>
<name>CHT_GIBBA</name>